<name>VF143_IIV3</name>
<protein>
    <recommendedName>
        <fullName>Putative kinase protein 029R</fullName>
        <ecNumber>2.7.-.-</ecNumber>
    </recommendedName>
</protein>
<evidence type="ECO:0000250" key="1"/>
<evidence type="ECO:0000255" key="2"/>
<evidence type="ECO:0000305" key="3"/>
<accession>Q197D1</accession>
<proteinExistence type="inferred from homology"/>
<organismHost>
    <name type="scientific">Aedes vexans</name>
    <name type="common">Inland floodwater mosquito</name>
    <name type="synonym">Culex vexans</name>
    <dbReference type="NCBI Taxonomy" id="7163"/>
</organismHost>
<organismHost>
    <name type="scientific">Culex territans</name>
    <dbReference type="NCBI Taxonomy" id="42431"/>
</organismHost>
<organismHost>
    <name type="scientific">Culiseta annulata</name>
    <dbReference type="NCBI Taxonomy" id="332058"/>
</organismHost>
<organismHost>
    <name type="scientific">Ochlerotatus sollicitans</name>
    <name type="common">eastern saltmarsh mosquito</name>
    <dbReference type="NCBI Taxonomy" id="310513"/>
</organismHost>
<organismHost>
    <name type="scientific">Ochlerotatus taeniorhynchus</name>
    <name type="common">Black salt marsh mosquito</name>
    <name type="synonym">Aedes taeniorhynchus</name>
    <dbReference type="NCBI Taxonomy" id="329105"/>
</organismHost>
<organismHost>
    <name type="scientific">Psorophora ferox</name>
    <dbReference type="NCBI Taxonomy" id="7183"/>
</organismHost>
<comment type="similarity">
    <text evidence="3">Belongs to the DCK/DGK family.</text>
</comment>
<organism>
    <name type="scientific">Invertebrate iridescent virus 3</name>
    <name type="common">IIV-3</name>
    <name type="synonym">Mosquito iridescent virus</name>
    <dbReference type="NCBI Taxonomy" id="345201"/>
    <lineage>
        <taxon>Viruses</taxon>
        <taxon>Varidnaviria</taxon>
        <taxon>Bamfordvirae</taxon>
        <taxon>Nucleocytoviricota</taxon>
        <taxon>Megaviricetes</taxon>
        <taxon>Pimascovirales</taxon>
        <taxon>Iridoviridae</taxon>
        <taxon>Betairidovirinae</taxon>
        <taxon>Chloriridovirus</taxon>
    </lineage>
</organism>
<reference key="1">
    <citation type="journal article" date="2006" name="J. Virol.">
        <title>Genome of invertebrate iridescent virus type 3 (mosquito iridescent virus).</title>
        <authorList>
            <person name="Delhon G."/>
            <person name="Tulman E.R."/>
            <person name="Afonso C.L."/>
            <person name="Lu Z."/>
            <person name="Becnel J.J."/>
            <person name="Moser B.A."/>
            <person name="Kutish G.F."/>
            <person name="Rock D.L."/>
        </authorList>
    </citation>
    <scope>NUCLEOTIDE SEQUENCE [LARGE SCALE GENOMIC DNA]</scope>
</reference>
<feature type="chain" id="PRO_0000377740" description="Putative kinase protein 029R">
    <location>
        <begin position="1"/>
        <end position="193"/>
    </location>
</feature>
<feature type="active site" description="Proton acceptor" evidence="2">
    <location>
        <position position="78"/>
    </location>
</feature>
<feature type="binding site" evidence="1">
    <location>
        <begin position="9"/>
        <end position="17"/>
    </location>
    <ligand>
        <name>ATP</name>
        <dbReference type="ChEBI" id="CHEBI:30616"/>
    </ligand>
</feature>
<feature type="binding site" evidence="1">
    <location>
        <position position="31"/>
    </location>
    <ligand>
        <name>substrate</name>
    </ligand>
</feature>
<feature type="binding site" evidence="1">
    <location>
        <position position="43"/>
    </location>
    <ligand>
        <name>substrate</name>
    </ligand>
</feature>
<feature type="binding site" evidence="1">
    <location>
        <position position="54"/>
    </location>
    <ligand>
        <name>substrate</name>
    </ligand>
</feature>
<feature type="binding site" evidence="1">
    <location>
        <position position="79"/>
    </location>
    <ligand>
        <name>substrate</name>
    </ligand>
</feature>
<feature type="binding site" evidence="1">
    <location>
        <position position="142"/>
    </location>
    <ligand>
        <name>substrate</name>
    </ligand>
</feature>
<sequence>MVYVISIEGIIGSGKSSLMDQLKRHYTCHQEPLHDWSLLQPFYDDMERYASPFQFQVLFSFHKLYSTIKNVNDVVILERCPWSSRNIFTKMLVQDGFISPQEYELYMSFYDRLAFTTNLHIYLKVDPTVAFDRILKRNREAEKTLQYDYLVRLNHQYEAEISKCDNVYVVDANKPMELVGNTVLRLLSRLCRR</sequence>
<gene>
    <name type="ORF">IIV3-029R</name>
</gene>
<keyword id="KW-0067">ATP-binding</keyword>
<keyword id="KW-0418">Kinase</keyword>
<keyword id="KW-0547">Nucleotide-binding</keyword>
<keyword id="KW-1185">Reference proteome</keyword>
<keyword id="KW-0808">Transferase</keyword>
<dbReference type="EC" id="2.7.-.-"/>
<dbReference type="EMBL" id="DQ643392">
    <property type="protein sequence ID" value="ABF82059.1"/>
    <property type="molecule type" value="Genomic_DNA"/>
</dbReference>
<dbReference type="RefSeq" id="YP_654601.1">
    <property type="nucleotide sequence ID" value="NC_008187.1"/>
</dbReference>
<dbReference type="SMR" id="Q197D1"/>
<dbReference type="KEGG" id="vg:4156339"/>
<dbReference type="OrthoDB" id="12726at10239"/>
<dbReference type="Proteomes" id="UP000001358">
    <property type="component" value="Genome"/>
</dbReference>
<dbReference type="GO" id="GO:0005524">
    <property type="term" value="F:ATP binding"/>
    <property type="evidence" value="ECO:0007669"/>
    <property type="project" value="UniProtKB-KW"/>
</dbReference>
<dbReference type="GO" id="GO:0019136">
    <property type="term" value="F:deoxynucleoside kinase activity"/>
    <property type="evidence" value="ECO:0007669"/>
    <property type="project" value="InterPro"/>
</dbReference>
<dbReference type="Gene3D" id="3.40.50.300">
    <property type="entry name" value="P-loop containing nucleotide triphosphate hydrolases"/>
    <property type="match status" value="1"/>
</dbReference>
<dbReference type="InterPro" id="IPR002624">
    <property type="entry name" value="DCK/DGK"/>
</dbReference>
<dbReference type="InterPro" id="IPR050566">
    <property type="entry name" value="Deoxyribonucleoside_kinase"/>
</dbReference>
<dbReference type="InterPro" id="IPR031314">
    <property type="entry name" value="DNK_dom"/>
</dbReference>
<dbReference type="InterPro" id="IPR027417">
    <property type="entry name" value="P-loop_NTPase"/>
</dbReference>
<dbReference type="PANTHER" id="PTHR10513:SF35">
    <property type="entry name" value="DEOXYADENOSINE KINASE"/>
    <property type="match status" value="1"/>
</dbReference>
<dbReference type="PANTHER" id="PTHR10513">
    <property type="entry name" value="DEOXYNUCLEOSIDE KINASE"/>
    <property type="match status" value="1"/>
</dbReference>
<dbReference type="Pfam" id="PF01712">
    <property type="entry name" value="dNK"/>
    <property type="match status" value="1"/>
</dbReference>
<dbReference type="PIRSF" id="PIRSF000705">
    <property type="entry name" value="DNK"/>
    <property type="match status" value="1"/>
</dbReference>
<dbReference type="SUPFAM" id="SSF52540">
    <property type="entry name" value="P-loop containing nucleoside triphosphate hydrolases"/>
    <property type="match status" value="1"/>
</dbReference>